<feature type="signal peptide" evidence="1">
    <location>
        <begin position="1"/>
        <end position="15"/>
    </location>
</feature>
<feature type="propeptide" id="PRO_0000028221" description="Activation peptide" evidence="1">
    <location>
        <begin position="16"/>
        <end position="25"/>
    </location>
</feature>
<feature type="chain" id="PRO_0000028222" description="Trypsin I-P38">
    <location>
        <begin position="26"/>
        <end position="248"/>
    </location>
</feature>
<feature type="domain" description="Peptidase S1" evidence="2">
    <location>
        <begin position="26"/>
        <end position="246"/>
    </location>
</feature>
<feature type="active site" description="Charge relay system" evidence="1">
    <location>
        <position position="65"/>
    </location>
</feature>
<feature type="active site" description="Charge relay system" evidence="1">
    <location>
        <position position="109"/>
    </location>
</feature>
<feature type="active site" description="Charge relay system" evidence="1">
    <location>
        <position position="202"/>
    </location>
</feature>
<feature type="binding site" evidence="1">
    <location>
        <position position="77"/>
    </location>
    <ligand>
        <name>Ca(2+)</name>
        <dbReference type="ChEBI" id="CHEBI:29108"/>
    </ligand>
</feature>
<feature type="binding site" evidence="1">
    <location>
        <position position="79"/>
    </location>
    <ligand>
        <name>Ca(2+)</name>
        <dbReference type="ChEBI" id="CHEBI:29108"/>
    </ligand>
</feature>
<feature type="binding site" evidence="1">
    <location>
        <position position="87"/>
    </location>
    <ligand>
        <name>Ca(2+)</name>
        <dbReference type="ChEBI" id="CHEBI:29108"/>
    </ligand>
</feature>
<feature type="site" description="Required for specificity" evidence="1">
    <location>
        <position position="196"/>
    </location>
</feature>
<feature type="disulfide bond" evidence="2">
    <location>
        <begin position="32"/>
        <end position="162"/>
    </location>
</feature>
<feature type="disulfide bond" evidence="2">
    <location>
        <begin position="50"/>
        <end position="66"/>
    </location>
</feature>
<feature type="disulfide bond" evidence="2">
    <location>
        <begin position="134"/>
        <end position="235"/>
    </location>
</feature>
<feature type="disulfide bond" evidence="2">
    <location>
        <begin position="141"/>
        <end position="208"/>
    </location>
</feature>
<feature type="disulfide bond" evidence="2">
    <location>
        <begin position="173"/>
        <end position="187"/>
    </location>
</feature>
<feature type="disulfide bond" evidence="2">
    <location>
        <begin position="198"/>
        <end position="222"/>
    </location>
</feature>
<sequence length="248" mass="26088">MKFLVLVAFLGVAVAFPISDEDDDKIVGGYSCARSAAPYQVSLNSGYHFCGGSLISSQWVLSAAHCYKSSIQVKLGEYNLAAQDGSEQTISSSKVIRHSGYNANTLNNDIMLIKLSKAATLNSYVNTVPLPTSCVTAGTTCLISGWGNTLSSGSLYPDVLQCLNAPVLSSSQCSSAYPGRITSNMICIGYLNGGKDSCQGDSGGPVVCNGQLQGFVSWGIGCAQKGYPGVYTKVCNYVSWIKTTMSSN</sequence>
<accession>Q90628</accession>
<organism>
    <name type="scientific">Gallus gallus</name>
    <name type="common">Chicken</name>
    <dbReference type="NCBI Taxonomy" id="9031"/>
    <lineage>
        <taxon>Eukaryota</taxon>
        <taxon>Metazoa</taxon>
        <taxon>Chordata</taxon>
        <taxon>Craniata</taxon>
        <taxon>Vertebrata</taxon>
        <taxon>Euteleostomi</taxon>
        <taxon>Archelosauria</taxon>
        <taxon>Archosauria</taxon>
        <taxon>Dinosauria</taxon>
        <taxon>Saurischia</taxon>
        <taxon>Theropoda</taxon>
        <taxon>Coelurosauria</taxon>
        <taxon>Aves</taxon>
        <taxon>Neognathae</taxon>
        <taxon>Galloanserae</taxon>
        <taxon>Galliformes</taxon>
        <taxon>Phasianidae</taxon>
        <taxon>Phasianinae</taxon>
        <taxon>Gallus</taxon>
    </lineage>
</organism>
<dbReference type="EC" id="3.4.21.4"/>
<dbReference type="EMBL" id="U15156">
    <property type="protein sequence ID" value="AAA79913.1"/>
    <property type="molecule type" value="mRNA"/>
</dbReference>
<dbReference type="PIR" id="S55067">
    <property type="entry name" value="S55067"/>
</dbReference>
<dbReference type="SMR" id="Q90628"/>
<dbReference type="FunCoup" id="Q90628">
    <property type="interactions" value="47"/>
</dbReference>
<dbReference type="STRING" id="9031.ENSGALP00000016613"/>
<dbReference type="PaxDb" id="9031-ENSGALP00000016612"/>
<dbReference type="VEuPathDB" id="HostDB:geneid_396345"/>
<dbReference type="InParanoid" id="Q90628"/>
<dbReference type="SABIO-RK" id="Q90628"/>
<dbReference type="Proteomes" id="UP000000539">
    <property type="component" value="Unassembled WGS sequence"/>
</dbReference>
<dbReference type="GO" id="GO:0005615">
    <property type="term" value="C:extracellular space"/>
    <property type="evidence" value="ECO:0000318"/>
    <property type="project" value="GO_Central"/>
</dbReference>
<dbReference type="GO" id="GO:0046872">
    <property type="term" value="F:metal ion binding"/>
    <property type="evidence" value="ECO:0007669"/>
    <property type="project" value="UniProtKB-KW"/>
</dbReference>
<dbReference type="GO" id="GO:0004252">
    <property type="term" value="F:serine-type endopeptidase activity"/>
    <property type="evidence" value="ECO:0000318"/>
    <property type="project" value="GO_Central"/>
</dbReference>
<dbReference type="GO" id="GO:0007586">
    <property type="term" value="P:digestion"/>
    <property type="evidence" value="ECO:0007669"/>
    <property type="project" value="UniProtKB-KW"/>
</dbReference>
<dbReference type="GO" id="GO:0006508">
    <property type="term" value="P:proteolysis"/>
    <property type="evidence" value="ECO:0007669"/>
    <property type="project" value="UniProtKB-KW"/>
</dbReference>
<dbReference type="CDD" id="cd00190">
    <property type="entry name" value="Tryp_SPc"/>
    <property type="match status" value="1"/>
</dbReference>
<dbReference type="FunFam" id="2.40.10.10:FF:000008">
    <property type="entry name" value="Cationic trypsin"/>
    <property type="match status" value="1"/>
</dbReference>
<dbReference type="FunFam" id="2.40.10.10:FF:000005">
    <property type="entry name" value="Serine protease 37"/>
    <property type="match status" value="1"/>
</dbReference>
<dbReference type="Gene3D" id="2.40.10.10">
    <property type="entry name" value="Trypsin-like serine proteases"/>
    <property type="match status" value="2"/>
</dbReference>
<dbReference type="InterPro" id="IPR009003">
    <property type="entry name" value="Peptidase_S1_PA"/>
</dbReference>
<dbReference type="InterPro" id="IPR043504">
    <property type="entry name" value="Peptidase_S1_PA_chymotrypsin"/>
</dbReference>
<dbReference type="InterPro" id="IPR001314">
    <property type="entry name" value="Peptidase_S1A"/>
</dbReference>
<dbReference type="InterPro" id="IPR050127">
    <property type="entry name" value="Serine_Proteases_S1"/>
</dbReference>
<dbReference type="InterPro" id="IPR001254">
    <property type="entry name" value="Trypsin_dom"/>
</dbReference>
<dbReference type="InterPro" id="IPR018114">
    <property type="entry name" value="TRYPSIN_HIS"/>
</dbReference>
<dbReference type="InterPro" id="IPR033116">
    <property type="entry name" value="TRYPSIN_SER"/>
</dbReference>
<dbReference type="PANTHER" id="PTHR24264:SF15">
    <property type="entry name" value="RIKEN CDNA 2210010C04 GENE"/>
    <property type="match status" value="1"/>
</dbReference>
<dbReference type="PANTHER" id="PTHR24264">
    <property type="entry name" value="TRYPSIN-RELATED"/>
    <property type="match status" value="1"/>
</dbReference>
<dbReference type="Pfam" id="PF00089">
    <property type="entry name" value="Trypsin"/>
    <property type="match status" value="1"/>
</dbReference>
<dbReference type="PRINTS" id="PR00722">
    <property type="entry name" value="CHYMOTRYPSIN"/>
</dbReference>
<dbReference type="SMART" id="SM00020">
    <property type="entry name" value="Tryp_SPc"/>
    <property type="match status" value="1"/>
</dbReference>
<dbReference type="SUPFAM" id="SSF50494">
    <property type="entry name" value="Trypsin-like serine proteases"/>
    <property type="match status" value="1"/>
</dbReference>
<dbReference type="PROSITE" id="PS50240">
    <property type="entry name" value="TRYPSIN_DOM"/>
    <property type="match status" value="1"/>
</dbReference>
<dbReference type="PROSITE" id="PS00134">
    <property type="entry name" value="TRYPSIN_HIS"/>
    <property type="match status" value="1"/>
</dbReference>
<dbReference type="PROSITE" id="PS00135">
    <property type="entry name" value="TRYPSIN_SER"/>
    <property type="match status" value="1"/>
</dbReference>
<protein>
    <recommendedName>
        <fullName>Trypsin I-P38</fullName>
        <ecNumber>3.4.21.4</ecNumber>
    </recommendedName>
</protein>
<name>TRY2_CHICK</name>
<proteinExistence type="evidence at transcript level"/>
<evidence type="ECO:0000250" key="1"/>
<evidence type="ECO:0000255" key="2">
    <source>
        <dbReference type="PROSITE-ProRule" id="PRU00274"/>
    </source>
</evidence>
<reference key="1">
    <citation type="journal article" date="1995" name="Biochem. J.">
        <title>Isolation and characterization of the chicken trypsinogen gene family.</title>
        <authorList>
            <person name="Wang K."/>
            <person name="Gan L."/>
            <person name="Lee I."/>
            <person name="Hood L.E."/>
        </authorList>
    </citation>
    <scope>NUCLEOTIDE SEQUENCE [MRNA]</scope>
    <source>
        <tissue>Pancreas</tissue>
    </source>
</reference>
<comment type="catalytic activity">
    <reaction>
        <text>Preferential cleavage: Arg-|-Xaa, Lys-|-Xaa.</text>
        <dbReference type="EC" id="3.4.21.4"/>
    </reaction>
</comment>
<comment type="cofactor">
    <cofactor evidence="1">
        <name>Ca(2+)</name>
        <dbReference type="ChEBI" id="CHEBI:29108"/>
    </cofactor>
    <text evidence="1">Binds 1 Ca(2+) ion per subunit.</text>
</comment>
<comment type="subcellular location">
    <subcellularLocation>
        <location>Secreted</location>
        <location>Extracellular space</location>
    </subcellularLocation>
</comment>
<comment type="tissue specificity">
    <text>High levels are seen in the pancreas while lower levels are found in the liver, spleen and thymus.</text>
</comment>
<comment type="similarity">
    <text evidence="2">Belongs to the peptidase S1 family.</text>
</comment>
<keyword id="KW-0106">Calcium</keyword>
<keyword id="KW-0222">Digestion</keyword>
<keyword id="KW-1015">Disulfide bond</keyword>
<keyword id="KW-0378">Hydrolase</keyword>
<keyword id="KW-0479">Metal-binding</keyword>
<keyword id="KW-0645">Protease</keyword>
<keyword id="KW-1185">Reference proteome</keyword>
<keyword id="KW-0964">Secreted</keyword>
<keyword id="KW-0720">Serine protease</keyword>
<keyword id="KW-0732">Signal</keyword>
<keyword id="KW-0865">Zymogen</keyword>